<dbReference type="EMBL" id="AY261363">
    <property type="status" value="NOT_ANNOTATED_CDS"/>
    <property type="molecule type" value="Genomic_DNA"/>
</dbReference>
<dbReference type="SMR" id="P0CA50"/>
<dbReference type="Proteomes" id="UP000000859">
    <property type="component" value="Segment"/>
</dbReference>
<dbReference type="GO" id="GO:0044423">
    <property type="term" value="C:virion component"/>
    <property type="evidence" value="ECO:0007669"/>
    <property type="project" value="UniProtKB-KW"/>
</dbReference>
<proteinExistence type="inferred from homology"/>
<evidence type="ECO:0000250" key="1">
    <source>
        <dbReference type="UniProtKB" id="Q07385"/>
    </source>
</evidence>
<evidence type="ECO:0000305" key="2"/>
<feature type="chain" id="PRO_0000373522" description="Uncharacterized protein K145R">
    <location>
        <begin position="1"/>
        <end position="145"/>
    </location>
</feature>
<name>VF145_ASFP4</name>
<sequence>MDHYLKKLQEIYTKLEGHPFLFSPSKTNEKEFITLLNQALASTQLYRSIQQLFLTMYKLDPIGFINYIKTSKQEYLCLLINPKLVTKFLKITSFKIYINFRLKTFYISPNKYNNFYTAPSEEKTNHLLKEEKTWAKIVEEGGEES</sequence>
<gene>
    <name type="ordered locus">Pret-063</name>
</gene>
<comment type="subcellular location">
    <subcellularLocation>
        <location evidence="1">Virion</location>
    </subcellularLocation>
</comment>
<comment type="induction">
    <text evidence="2">Expressed in the late phase of the viral replicative cycle.</text>
</comment>
<comment type="similarity">
    <text evidence="2">Belongs to the asfivirus K145R family.</text>
</comment>
<keyword id="KW-0426">Late protein</keyword>
<keyword id="KW-0946">Virion</keyword>
<organism>
    <name type="scientific">African swine fever virus (isolate Tick/South Africa/Pretoriuskop Pr4/1996)</name>
    <name type="common">ASFV</name>
    <dbReference type="NCBI Taxonomy" id="561443"/>
    <lineage>
        <taxon>Viruses</taxon>
        <taxon>Varidnaviria</taxon>
        <taxon>Bamfordvirae</taxon>
        <taxon>Nucleocytoviricota</taxon>
        <taxon>Pokkesviricetes</taxon>
        <taxon>Asfuvirales</taxon>
        <taxon>Asfarviridae</taxon>
        <taxon>Asfivirus</taxon>
        <taxon>African swine fever virus</taxon>
    </lineage>
</organism>
<accession>P0CA50</accession>
<organismHost>
    <name type="scientific">Ornithodoros</name>
    <name type="common">relapsing fever ticks</name>
    <dbReference type="NCBI Taxonomy" id="6937"/>
</organismHost>
<organismHost>
    <name type="scientific">Phacochoerus aethiopicus</name>
    <name type="common">Warthog</name>
    <dbReference type="NCBI Taxonomy" id="85517"/>
</organismHost>
<organismHost>
    <name type="scientific">Phacochoerus africanus</name>
    <name type="common">Warthog</name>
    <dbReference type="NCBI Taxonomy" id="41426"/>
</organismHost>
<organismHost>
    <name type="scientific">Potamochoerus larvatus</name>
    <name type="common">Bushpig</name>
    <dbReference type="NCBI Taxonomy" id="273792"/>
</organismHost>
<organismHost>
    <name type="scientific">Sus scrofa</name>
    <name type="common">Pig</name>
    <dbReference type="NCBI Taxonomy" id="9823"/>
</organismHost>
<reference key="1">
    <citation type="submission" date="2003-03" db="EMBL/GenBank/DDBJ databases">
        <title>African swine fever virus genomes.</title>
        <authorList>
            <person name="Kutish G.F."/>
            <person name="Rock D.L."/>
        </authorList>
    </citation>
    <scope>NUCLEOTIDE SEQUENCE [LARGE SCALE GENOMIC DNA]</scope>
</reference>
<protein>
    <recommendedName>
        <fullName>Uncharacterized protein K145R</fullName>
        <shortName>pK145R</shortName>
    </recommendedName>
</protein>